<accession>Q0HX57</accession>
<gene>
    <name evidence="1" type="primary">ispG</name>
    <name type="ordered locus">Shewmr7_1299</name>
</gene>
<comment type="function">
    <text evidence="1">Converts 2C-methyl-D-erythritol 2,4-cyclodiphosphate (ME-2,4cPP) into 1-hydroxy-2-methyl-2-(E)-butenyl 4-diphosphate.</text>
</comment>
<comment type="catalytic activity">
    <reaction evidence="1">
        <text>(2E)-4-hydroxy-3-methylbut-2-enyl diphosphate + oxidized [flavodoxin] + H2O + 2 H(+) = 2-C-methyl-D-erythritol 2,4-cyclic diphosphate + reduced [flavodoxin]</text>
        <dbReference type="Rhea" id="RHEA:43604"/>
        <dbReference type="Rhea" id="RHEA-COMP:10622"/>
        <dbReference type="Rhea" id="RHEA-COMP:10623"/>
        <dbReference type="ChEBI" id="CHEBI:15377"/>
        <dbReference type="ChEBI" id="CHEBI:15378"/>
        <dbReference type="ChEBI" id="CHEBI:57618"/>
        <dbReference type="ChEBI" id="CHEBI:58210"/>
        <dbReference type="ChEBI" id="CHEBI:58483"/>
        <dbReference type="ChEBI" id="CHEBI:128753"/>
        <dbReference type="EC" id="1.17.7.3"/>
    </reaction>
</comment>
<comment type="cofactor">
    <cofactor evidence="1">
        <name>[4Fe-4S] cluster</name>
        <dbReference type="ChEBI" id="CHEBI:49883"/>
    </cofactor>
    <text evidence="1">Binds 1 [4Fe-4S] cluster.</text>
</comment>
<comment type="pathway">
    <text evidence="1">Isoprenoid biosynthesis; isopentenyl diphosphate biosynthesis via DXP pathway; isopentenyl diphosphate from 1-deoxy-D-xylulose 5-phosphate: step 5/6.</text>
</comment>
<comment type="similarity">
    <text evidence="1">Belongs to the IspG family.</text>
</comment>
<sequence length="371" mass="40590">MYNETPIKRRPSTRIYVGNVPIGDGAPIAVQSMTNTKTTDVEATVAQIRALEKVGADIVRVSVPTMDAAEAFKVIKQSVSVPLVADIHFDYRIALKVAEYGVDCLRINPGNIGNEERIRSVVECARDKNIPIRIGVNGGSLEKDLMDKYKEPTPEALLESAMRHVDILDRLNFDQFKVSVKASDVFLAVESYRLLAKQIRQPLHLGITEAGGARAGAVKSAVGLGMLLAEGIGDTLRISLAADPVEEIKVGFDILKSLRIRSRGINFIACPSCSRQEFDVISTVNELERRLEDVTTAMDVSIIGCVVNGPGEALVSHIGLTGGHRKSGYYDEGERQKERFDNDNLVDSLEAKIRAKASQMANRIQVKDTTE</sequence>
<feature type="chain" id="PRO_1000011523" description="4-hydroxy-3-methylbut-2-en-1-yl diphosphate synthase (flavodoxin)">
    <location>
        <begin position="1"/>
        <end position="371"/>
    </location>
</feature>
<feature type="binding site" evidence="1">
    <location>
        <position position="270"/>
    </location>
    <ligand>
        <name>[4Fe-4S] cluster</name>
        <dbReference type="ChEBI" id="CHEBI:49883"/>
    </ligand>
</feature>
<feature type="binding site" evidence="1">
    <location>
        <position position="273"/>
    </location>
    <ligand>
        <name>[4Fe-4S] cluster</name>
        <dbReference type="ChEBI" id="CHEBI:49883"/>
    </ligand>
</feature>
<feature type="binding site" evidence="1">
    <location>
        <position position="305"/>
    </location>
    <ligand>
        <name>[4Fe-4S] cluster</name>
        <dbReference type="ChEBI" id="CHEBI:49883"/>
    </ligand>
</feature>
<feature type="binding site" evidence="1">
    <location>
        <position position="312"/>
    </location>
    <ligand>
        <name>[4Fe-4S] cluster</name>
        <dbReference type="ChEBI" id="CHEBI:49883"/>
    </ligand>
</feature>
<dbReference type="EC" id="1.17.7.3" evidence="1"/>
<dbReference type="EMBL" id="CP000444">
    <property type="protein sequence ID" value="ABI42298.1"/>
    <property type="molecule type" value="Genomic_DNA"/>
</dbReference>
<dbReference type="SMR" id="Q0HX57"/>
<dbReference type="KEGG" id="shm:Shewmr7_1299"/>
<dbReference type="HOGENOM" id="CLU_042258_0_0_6"/>
<dbReference type="UniPathway" id="UPA00056">
    <property type="reaction ID" value="UER00096"/>
</dbReference>
<dbReference type="GO" id="GO:0051539">
    <property type="term" value="F:4 iron, 4 sulfur cluster binding"/>
    <property type="evidence" value="ECO:0007669"/>
    <property type="project" value="UniProtKB-UniRule"/>
</dbReference>
<dbReference type="GO" id="GO:0046429">
    <property type="term" value="F:4-hydroxy-3-methylbut-2-en-1-yl diphosphate synthase activity (ferredoxin)"/>
    <property type="evidence" value="ECO:0007669"/>
    <property type="project" value="UniProtKB-UniRule"/>
</dbReference>
<dbReference type="GO" id="GO:0141197">
    <property type="term" value="F:4-hydroxy-3-methylbut-2-enyl-diphosphate synthase activity (flavodoxin)"/>
    <property type="evidence" value="ECO:0007669"/>
    <property type="project" value="UniProtKB-EC"/>
</dbReference>
<dbReference type="GO" id="GO:0005506">
    <property type="term" value="F:iron ion binding"/>
    <property type="evidence" value="ECO:0007669"/>
    <property type="project" value="InterPro"/>
</dbReference>
<dbReference type="GO" id="GO:0019288">
    <property type="term" value="P:isopentenyl diphosphate biosynthetic process, methylerythritol 4-phosphate pathway"/>
    <property type="evidence" value="ECO:0007669"/>
    <property type="project" value="UniProtKB-UniRule"/>
</dbReference>
<dbReference type="GO" id="GO:0016114">
    <property type="term" value="P:terpenoid biosynthetic process"/>
    <property type="evidence" value="ECO:0007669"/>
    <property type="project" value="InterPro"/>
</dbReference>
<dbReference type="FunFam" id="3.20.20.20:FF:000001">
    <property type="entry name" value="4-hydroxy-3-methylbut-2-en-1-yl diphosphate synthase (flavodoxin)"/>
    <property type="match status" value="1"/>
</dbReference>
<dbReference type="FunFam" id="3.30.413.10:FF:000002">
    <property type="entry name" value="4-hydroxy-3-methylbut-2-en-1-yl diphosphate synthase (flavodoxin)"/>
    <property type="match status" value="1"/>
</dbReference>
<dbReference type="Gene3D" id="3.20.20.20">
    <property type="entry name" value="Dihydropteroate synthase-like"/>
    <property type="match status" value="1"/>
</dbReference>
<dbReference type="Gene3D" id="3.30.413.10">
    <property type="entry name" value="Sulfite Reductase Hemoprotein, domain 1"/>
    <property type="match status" value="1"/>
</dbReference>
<dbReference type="HAMAP" id="MF_00159">
    <property type="entry name" value="IspG"/>
    <property type="match status" value="1"/>
</dbReference>
<dbReference type="InterPro" id="IPR011005">
    <property type="entry name" value="Dihydropteroate_synth-like_sf"/>
</dbReference>
<dbReference type="InterPro" id="IPR016425">
    <property type="entry name" value="IspG_bac"/>
</dbReference>
<dbReference type="InterPro" id="IPR004588">
    <property type="entry name" value="IspG_bac-typ"/>
</dbReference>
<dbReference type="InterPro" id="IPR045854">
    <property type="entry name" value="NO2/SO3_Rdtase_4Fe4S_sf"/>
</dbReference>
<dbReference type="NCBIfam" id="TIGR00612">
    <property type="entry name" value="ispG_gcpE"/>
    <property type="match status" value="1"/>
</dbReference>
<dbReference type="NCBIfam" id="NF001540">
    <property type="entry name" value="PRK00366.1"/>
    <property type="match status" value="1"/>
</dbReference>
<dbReference type="PANTHER" id="PTHR30454">
    <property type="entry name" value="4-HYDROXY-3-METHYLBUT-2-EN-1-YL DIPHOSPHATE SYNTHASE"/>
    <property type="match status" value="1"/>
</dbReference>
<dbReference type="PANTHER" id="PTHR30454:SF0">
    <property type="entry name" value="4-HYDROXY-3-METHYLBUT-2-EN-1-YL DIPHOSPHATE SYNTHASE (FERREDOXIN), CHLOROPLASTIC"/>
    <property type="match status" value="1"/>
</dbReference>
<dbReference type="Pfam" id="PF04551">
    <property type="entry name" value="GcpE"/>
    <property type="match status" value="1"/>
</dbReference>
<dbReference type="PIRSF" id="PIRSF004640">
    <property type="entry name" value="IspG"/>
    <property type="match status" value="1"/>
</dbReference>
<dbReference type="SUPFAM" id="SSF51717">
    <property type="entry name" value="Dihydropteroate synthetase-like"/>
    <property type="match status" value="1"/>
</dbReference>
<dbReference type="SUPFAM" id="SSF56014">
    <property type="entry name" value="Nitrite and sulphite reductase 4Fe-4S domain-like"/>
    <property type="match status" value="1"/>
</dbReference>
<name>ISPG_SHESR</name>
<reference key="1">
    <citation type="submission" date="2006-08" db="EMBL/GenBank/DDBJ databases">
        <title>Complete sequence of chromosome 1 of Shewanella sp. MR-7.</title>
        <authorList>
            <person name="Copeland A."/>
            <person name="Lucas S."/>
            <person name="Lapidus A."/>
            <person name="Barry K."/>
            <person name="Detter J.C."/>
            <person name="Glavina del Rio T."/>
            <person name="Hammon N."/>
            <person name="Israni S."/>
            <person name="Dalin E."/>
            <person name="Tice H."/>
            <person name="Pitluck S."/>
            <person name="Kiss H."/>
            <person name="Brettin T."/>
            <person name="Bruce D."/>
            <person name="Han C."/>
            <person name="Tapia R."/>
            <person name="Gilna P."/>
            <person name="Schmutz J."/>
            <person name="Larimer F."/>
            <person name="Land M."/>
            <person name="Hauser L."/>
            <person name="Kyrpides N."/>
            <person name="Mikhailova N."/>
            <person name="Nealson K."/>
            <person name="Konstantinidis K."/>
            <person name="Klappenbach J."/>
            <person name="Tiedje J."/>
            <person name="Richardson P."/>
        </authorList>
    </citation>
    <scope>NUCLEOTIDE SEQUENCE [LARGE SCALE GENOMIC DNA]</scope>
    <source>
        <strain>MR-7</strain>
    </source>
</reference>
<organism>
    <name type="scientific">Shewanella sp. (strain MR-7)</name>
    <dbReference type="NCBI Taxonomy" id="60481"/>
    <lineage>
        <taxon>Bacteria</taxon>
        <taxon>Pseudomonadati</taxon>
        <taxon>Pseudomonadota</taxon>
        <taxon>Gammaproteobacteria</taxon>
        <taxon>Alteromonadales</taxon>
        <taxon>Shewanellaceae</taxon>
        <taxon>Shewanella</taxon>
    </lineage>
</organism>
<protein>
    <recommendedName>
        <fullName evidence="1">4-hydroxy-3-methylbut-2-en-1-yl diphosphate synthase (flavodoxin)</fullName>
        <ecNumber evidence="1">1.17.7.3</ecNumber>
    </recommendedName>
    <alternativeName>
        <fullName evidence="1">1-hydroxy-2-methyl-2-(E)-butenyl 4-diphosphate synthase</fullName>
    </alternativeName>
</protein>
<proteinExistence type="inferred from homology"/>
<keyword id="KW-0004">4Fe-4S</keyword>
<keyword id="KW-0408">Iron</keyword>
<keyword id="KW-0411">Iron-sulfur</keyword>
<keyword id="KW-0414">Isoprene biosynthesis</keyword>
<keyword id="KW-0479">Metal-binding</keyword>
<keyword id="KW-0560">Oxidoreductase</keyword>
<evidence type="ECO:0000255" key="1">
    <source>
        <dbReference type="HAMAP-Rule" id="MF_00159"/>
    </source>
</evidence>